<proteinExistence type="inferred from homology"/>
<gene>
    <name type="primary">GPD</name>
</gene>
<reference key="1">
    <citation type="journal article" date="1996" name="Appl. Environ. Microbiol.">
        <title>Identification of some ectomycorrhizal basidiomycetes by PCR amplification of their gpd (glyceraldehyde-3-phosphate dehydrogenase) genes.</title>
        <authorList>
            <person name="Kreuzinger N."/>
            <person name="Podeu R."/>
            <person name="Gruber F."/>
            <person name="Gobl F."/>
            <person name="Kubicek C.P."/>
        </authorList>
    </citation>
    <scope>NUCLEOTIDE SEQUENCE [GENOMIC DNA]</scope>
</reference>
<comment type="catalytic activity">
    <reaction evidence="2">
        <text>D-glyceraldehyde 3-phosphate + phosphate + NAD(+) = (2R)-3-phospho-glyceroyl phosphate + NADH + H(+)</text>
        <dbReference type="Rhea" id="RHEA:10300"/>
        <dbReference type="ChEBI" id="CHEBI:15378"/>
        <dbReference type="ChEBI" id="CHEBI:43474"/>
        <dbReference type="ChEBI" id="CHEBI:57540"/>
        <dbReference type="ChEBI" id="CHEBI:57604"/>
        <dbReference type="ChEBI" id="CHEBI:57945"/>
        <dbReference type="ChEBI" id="CHEBI:59776"/>
        <dbReference type="EC" id="1.2.1.12"/>
    </reaction>
</comment>
<comment type="pathway">
    <text>Carbohydrate degradation; glycolysis; pyruvate from D-glyceraldehyde 3-phosphate: step 1/5.</text>
</comment>
<comment type="subunit">
    <text evidence="1">Homotetramer.</text>
</comment>
<comment type="subcellular location">
    <subcellularLocation>
        <location>Cytoplasm</location>
    </subcellularLocation>
</comment>
<comment type="similarity">
    <text evidence="3">Belongs to the glyceraldehyde-3-phosphate dehydrogenase family.</text>
</comment>
<sequence>LLDPRVKVLAVSDPFIDLQYMVYMFKYDSVHGRFKGTVEIKDGKLVIDGHPITVFQERDPANIQWGSVGADYVVESSGVFTTVDKASAHLKGGAKKVIISAPSADAPMFVVGVNLDAYDSKYTVISNASCTTNCLAPLAKVINDKFGIVEGLMSTIHATTATQKTVDGPSNKDWRGGRAVNGNIIPSSTGAAKAVGKVIPALNGKLTGLAFRVPTNDVSVVDLVVRLEKEATYDEIKLAVKEAADGPLKGIIEYTDDLVVSTDFIGSTASSIFDAGAGIQLNKNFAKLIS</sequence>
<keyword id="KW-0963">Cytoplasm</keyword>
<keyword id="KW-0324">Glycolysis</keyword>
<keyword id="KW-0520">NAD</keyword>
<keyword id="KW-0560">Oxidoreductase</keyword>
<name>G3P_LACDT</name>
<dbReference type="EC" id="1.2.1.12"/>
<dbReference type="EMBL" id="U30876">
    <property type="protein sequence ID" value="AAB38369.1"/>
    <property type="molecule type" value="Genomic_DNA"/>
</dbReference>
<dbReference type="SMR" id="P55070"/>
<dbReference type="UniPathway" id="UPA00109">
    <property type="reaction ID" value="UER00184"/>
</dbReference>
<dbReference type="GO" id="GO:0005829">
    <property type="term" value="C:cytosol"/>
    <property type="evidence" value="ECO:0007669"/>
    <property type="project" value="TreeGrafter"/>
</dbReference>
<dbReference type="GO" id="GO:0004365">
    <property type="term" value="F:glyceraldehyde-3-phosphate dehydrogenase (NAD+) (phosphorylating) activity"/>
    <property type="evidence" value="ECO:0007669"/>
    <property type="project" value="UniProtKB-EC"/>
</dbReference>
<dbReference type="GO" id="GO:0051287">
    <property type="term" value="F:NAD binding"/>
    <property type="evidence" value="ECO:0007669"/>
    <property type="project" value="InterPro"/>
</dbReference>
<dbReference type="GO" id="GO:0006096">
    <property type="term" value="P:glycolytic process"/>
    <property type="evidence" value="ECO:0007669"/>
    <property type="project" value="UniProtKB-UniPathway"/>
</dbReference>
<dbReference type="CDD" id="cd18126">
    <property type="entry name" value="GAPDH_I_C"/>
    <property type="match status" value="1"/>
</dbReference>
<dbReference type="CDD" id="cd05214">
    <property type="entry name" value="GAPDH_I_N"/>
    <property type="match status" value="1"/>
</dbReference>
<dbReference type="FunFam" id="3.30.360.10:FF:000001">
    <property type="entry name" value="Glyceraldehyde-3-phosphate dehydrogenase"/>
    <property type="match status" value="1"/>
</dbReference>
<dbReference type="FunFam" id="3.40.50.720:FF:000266">
    <property type="entry name" value="Glyceraldehyde-3-phosphate dehydrogenase"/>
    <property type="match status" value="1"/>
</dbReference>
<dbReference type="Gene3D" id="3.30.360.10">
    <property type="entry name" value="Dihydrodipicolinate Reductase, domain 2"/>
    <property type="match status" value="1"/>
</dbReference>
<dbReference type="Gene3D" id="3.40.50.720">
    <property type="entry name" value="NAD(P)-binding Rossmann-like Domain"/>
    <property type="match status" value="1"/>
</dbReference>
<dbReference type="InterPro" id="IPR020831">
    <property type="entry name" value="GlycerAld/Erythrose_P_DH"/>
</dbReference>
<dbReference type="InterPro" id="IPR020830">
    <property type="entry name" value="GlycerAld_3-P_DH_AS"/>
</dbReference>
<dbReference type="InterPro" id="IPR020829">
    <property type="entry name" value="GlycerAld_3-P_DH_cat"/>
</dbReference>
<dbReference type="InterPro" id="IPR020828">
    <property type="entry name" value="GlycerAld_3-P_DH_NAD(P)-bd"/>
</dbReference>
<dbReference type="InterPro" id="IPR036291">
    <property type="entry name" value="NAD(P)-bd_dom_sf"/>
</dbReference>
<dbReference type="PANTHER" id="PTHR10836">
    <property type="entry name" value="GLYCERALDEHYDE 3-PHOSPHATE DEHYDROGENASE"/>
    <property type="match status" value="1"/>
</dbReference>
<dbReference type="PANTHER" id="PTHR10836:SF76">
    <property type="entry name" value="GLYCERALDEHYDE-3-PHOSPHATE DEHYDROGENASE-RELATED"/>
    <property type="match status" value="1"/>
</dbReference>
<dbReference type="Pfam" id="PF02800">
    <property type="entry name" value="Gp_dh_C"/>
    <property type="match status" value="1"/>
</dbReference>
<dbReference type="Pfam" id="PF00044">
    <property type="entry name" value="Gp_dh_N"/>
    <property type="match status" value="1"/>
</dbReference>
<dbReference type="PIRSF" id="PIRSF000149">
    <property type="entry name" value="GAP_DH"/>
    <property type="match status" value="1"/>
</dbReference>
<dbReference type="PRINTS" id="PR00078">
    <property type="entry name" value="G3PDHDRGNASE"/>
</dbReference>
<dbReference type="SMART" id="SM00846">
    <property type="entry name" value="Gp_dh_N"/>
    <property type="match status" value="1"/>
</dbReference>
<dbReference type="SUPFAM" id="SSF55347">
    <property type="entry name" value="Glyceraldehyde-3-phosphate dehydrogenase-like, C-terminal domain"/>
    <property type="match status" value="1"/>
</dbReference>
<dbReference type="SUPFAM" id="SSF51735">
    <property type="entry name" value="NAD(P)-binding Rossmann-fold domains"/>
    <property type="match status" value="1"/>
</dbReference>
<dbReference type="PROSITE" id="PS00071">
    <property type="entry name" value="GAPDH"/>
    <property type="match status" value="1"/>
</dbReference>
<evidence type="ECO:0000250" key="1"/>
<evidence type="ECO:0000255" key="2">
    <source>
        <dbReference type="PROSITE-ProRule" id="PRU10009"/>
    </source>
</evidence>
<evidence type="ECO:0000305" key="3"/>
<accession>P55070</accession>
<protein>
    <recommendedName>
        <fullName>Glyceraldehyde-3-phosphate dehydrogenase</fullName>
        <shortName>GAPDH</shortName>
        <ecNumber>1.2.1.12</ecNumber>
    </recommendedName>
</protein>
<feature type="chain" id="PRO_0000145559" description="Glyceraldehyde-3-phosphate dehydrogenase">
    <location>
        <begin position="1" status="less than"/>
        <end position="290" status="greater than"/>
    </location>
</feature>
<feature type="active site" description="Nucleophile" evidence="2">
    <location>
        <position position="130"/>
    </location>
</feature>
<feature type="binding site" evidence="1">
    <location>
        <position position="13"/>
    </location>
    <ligand>
        <name>NAD(+)</name>
        <dbReference type="ChEBI" id="CHEBI:57540"/>
    </ligand>
</feature>
<feature type="binding site" evidence="1">
    <location>
        <position position="58"/>
    </location>
    <ligand>
        <name>NAD(+)</name>
        <dbReference type="ChEBI" id="CHEBI:57540"/>
    </ligand>
</feature>
<feature type="binding site" evidence="1">
    <location>
        <begin position="129"/>
        <end position="131"/>
    </location>
    <ligand>
        <name>D-glyceraldehyde 3-phosphate</name>
        <dbReference type="ChEBI" id="CHEBI:59776"/>
    </ligand>
</feature>
<feature type="binding site" evidence="1">
    <location>
        <position position="160"/>
    </location>
    <ligand>
        <name>D-glyceraldehyde 3-phosphate</name>
        <dbReference type="ChEBI" id="CHEBI:59776"/>
    </ligand>
</feature>
<feature type="binding site" evidence="1">
    <location>
        <begin position="189"/>
        <end position="190"/>
    </location>
    <ligand>
        <name>D-glyceraldehyde 3-phosphate</name>
        <dbReference type="ChEBI" id="CHEBI:59776"/>
    </ligand>
</feature>
<feature type="binding site" evidence="1">
    <location>
        <position position="212"/>
    </location>
    <ligand>
        <name>D-glyceraldehyde 3-phosphate</name>
        <dbReference type="ChEBI" id="CHEBI:59776"/>
    </ligand>
</feature>
<feature type="site" description="Activates thiol group during catalysis" evidence="1">
    <location>
        <position position="157"/>
    </location>
</feature>
<feature type="non-terminal residue">
    <location>
        <position position="1"/>
    </location>
</feature>
<feature type="non-terminal residue">
    <location>
        <position position="290"/>
    </location>
</feature>
<organism>
    <name type="scientific">Lactarius deterrimus</name>
    <name type="common">False saffron milkcap</name>
    <dbReference type="NCBI Taxonomy" id="36060"/>
    <lineage>
        <taxon>Eukaryota</taxon>
        <taxon>Fungi</taxon>
        <taxon>Dikarya</taxon>
        <taxon>Basidiomycota</taxon>
        <taxon>Agaricomycotina</taxon>
        <taxon>Agaricomycetes</taxon>
        <taxon>Russulales</taxon>
        <taxon>Russulaceae</taxon>
        <taxon>Lactarius</taxon>
    </lineage>
</organism>